<accession>A5UIN9</accession>
<gene>
    <name evidence="1" type="primary">hldD</name>
    <name type="ordered locus">CGSHiGG_09225</name>
</gene>
<reference key="1">
    <citation type="journal article" date="2007" name="Genome Biol.">
        <title>Characterization and modeling of the Haemophilus influenzae core and supragenomes based on the complete genomic sequences of Rd and 12 clinical nontypeable strains.</title>
        <authorList>
            <person name="Hogg J.S."/>
            <person name="Hu F.Z."/>
            <person name="Janto B."/>
            <person name="Boissy R."/>
            <person name="Hayes J."/>
            <person name="Keefe R."/>
            <person name="Post J.C."/>
            <person name="Ehrlich G.D."/>
        </authorList>
    </citation>
    <scope>NUCLEOTIDE SEQUENCE [LARGE SCALE GENOMIC DNA]</scope>
    <source>
        <strain>PittGG</strain>
    </source>
</reference>
<sequence>MIIVTGGAGFIGSNIVKALNDLGRKDILVVDNLKDGTKFANLVDLDIADYCDKEDFIASIIAGDEFGDIDAVFHEGACSATTEWDGKYIMHNNYEYSKELLHYCLDREIPFFYASSAATYGDTKVFREEREFEGPLNVYGYSKFLFDQYVRNILPEAKSPVCGFRYFNVYGPRENHKGSMASVAFHLNNQILKGENPKLFAGSEGFRRDFVYVGDVAAVNIWCWQNGISGIYNLGTGNAESFRAVADAVVKFHGKGEIETIPFPEHLKSRYQEYTQADLTKLRSTGYDKPFKTVAEGVAEYMAWLNRK</sequence>
<keyword id="KW-0119">Carbohydrate metabolism</keyword>
<keyword id="KW-0413">Isomerase</keyword>
<keyword id="KW-0521">NADP</keyword>
<feature type="chain" id="PRO_1000069358" description="ADP-L-glycero-D-manno-heptose-6-epimerase">
    <location>
        <begin position="1"/>
        <end position="308"/>
    </location>
</feature>
<feature type="active site" description="Proton acceptor" evidence="1">
    <location>
        <position position="139"/>
    </location>
</feature>
<feature type="active site" description="Proton acceptor" evidence="1">
    <location>
        <position position="177"/>
    </location>
</feature>
<feature type="binding site" evidence="1">
    <location>
        <begin position="10"/>
        <end position="11"/>
    </location>
    <ligand>
        <name>NADP(+)</name>
        <dbReference type="ChEBI" id="CHEBI:58349"/>
    </ligand>
</feature>
<feature type="binding site" evidence="1">
    <location>
        <begin position="31"/>
        <end position="32"/>
    </location>
    <ligand>
        <name>NADP(+)</name>
        <dbReference type="ChEBI" id="CHEBI:58349"/>
    </ligand>
</feature>
<feature type="binding site" evidence="1">
    <location>
        <position position="38"/>
    </location>
    <ligand>
        <name>NADP(+)</name>
        <dbReference type="ChEBI" id="CHEBI:58349"/>
    </ligand>
</feature>
<feature type="binding site" evidence="1">
    <location>
        <position position="53"/>
    </location>
    <ligand>
        <name>NADP(+)</name>
        <dbReference type="ChEBI" id="CHEBI:58349"/>
    </ligand>
</feature>
<feature type="binding site" evidence="1">
    <location>
        <begin position="75"/>
        <end position="79"/>
    </location>
    <ligand>
        <name>NADP(+)</name>
        <dbReference type="ChEBI" id="CHEBI:58349"/>
    </ligand>
</feature>
<feature type="binding site" evidence="1">
    <location>
        <position position="92"/>
    </location>
    <ligand>
        <name>NADP(+)</name>
        <dbReference type="ChEBI" id="CHEBI:58349"/>
    </ligand>
</feature>
<feature type="binding site" evidence="1">
    <location>
        <position position="143"/>
    </location>
    <ligand>
        <name>NADP(+)</name>
        <dbReference type="ChEBI" id="CHEBI:58349"/>
    </ligand>
</feature>
<feature type="binding site" evidence="1">
    <location>
        <position position="168"/>
    </location>
    <ligand>
        <name>substrate</name>
    </ligand>
</feature>
<feature type="binding site" evidence="1">
    <location>
        <position position="169"/>
    </location>
    <ligand>
        <name>NADP(+)</name>
        <dbReference type="ChEBI" id="CHEBI:58349"/>
    </ligand>
</feature>
<feature type="binding site" evidence="1">
    <location>
        <position position="177"/>
    </location>
    <ligand>
        <name>NADP(+)</name>
        <dbReference type="ChEBI" id="CHEBI:58349"/>
    </ligand>
</feature>
<feature type="binding site" evidence="1">
    <location>
        <position position="179"/>
    </location>
    <ligand>
        <name>substrate</name>
    </ligand>
</feature>
<feature type="binding site" evidence="1">
    <location>
        <position position="186"/>
    </location>
    <ligand>
        <name>substrate</name>
    </ligand>
</feature>
<feature type="binding site" evidence="1">
    <location>
        <begin position="200"/>
        <end position="203"/>
    </location>
    <ligand>
        <name>substrate</name>
    </ligand>
</feature>
<feature type="binding site" evidence="1">
    <location>
        <position position="208"/>
    </location>
    <ligand>
        <name>substrate</name>
    </ligand>
</feature>
<feature type="binding site" evidence="1">
    <location>
        <position position="271"/>
    </location>
    <ligand>
        <name>substrate</name>
    </ligand>
</feature>
<dbReference type="EC" id="5.1.3.20" evidence="1"/>
<dbReference type="EMBL" id="CP000672">
    <property type="protein sequence ID" value="ABR00645.1"/>
    <property type="molecule type" value="Genomic_DNA"/>
</dbReference>
<dbReference type="SMR" id="A5UIN9"/>
<dbReference type="KEGG" id="hiq:CGSHiGG_09225"/>
<dbReference type="HOGENOM" id="CLU_007383_1_3_6"/>
<dbReference type="UniPathway" id="UPA00356">
    <property type="reaction ID" value="UER00440"/>
</dbReference>
<dbReference type="Proteomes" id="UP000001990">
    <property type="component" value="Chromosome"/>
</dbReference>
<dbReference type="GO" id="GO:0008712">
    <property type="term" value="F:ADP-glyceromanno-heptose 6-epimerase activity"/>
    <property type="evidence" value="ECO:0007669"/>
    <property type="project" value="UniProtKB-UniRule"/>
</dbReference>
<dbReference type="GO" id="GO:0050661">
    <property type="term" value="F:NADP binding"/>
    <property type="evidence" value="ECO:0007669"/>
    <property type="project" value="InterPro"/>
</dbReference>
<dbReference type="GO" id="GO:0097171">
    <property type="term" value="P:ADP-L-glycero-beta-D-manno-heptose biosynthetic process"/>
    <property type="evidence" value="ECO:0007669"/>
    <property type="project" value="UniProtKB-UniPathway"/>
</dbReference>
<dbReference type="GO" id="GO:0005975">
    <property type="term" value="P:carbohydrate metabolic process"/>
    <property type="evidence" value="ECO:0007669"/>
    <property type="project" value="UniProtKB-UniRule"/>
</dbReference>
<dbReference type="CDD" id="cd05248">
    <property type="entry name" value="ADP_GME_SDR_e"/>
    <property type="match status" value="1"/>
</dbReference>
<dbReference type="Gene3D" id="3.40.50.720">
    <property type="entry name" value="NAD(P)-binding Rossmann-like Domain"/>
    <property type="match status" value="1"/>
</dbReference>
<dbReference type="Gene3D" id="3.90.25.10">
    <property type="entry name" value="UDP-galactose 4-epimerase, domain 1"/>
    <property type="match status" value="1"/>
</dbReference>
<dbReference type="HAMAP" id="MF_01601">
    <property type="entry name" value="Heptose_epimerase"/>
    <property type="match status" value="1"/>
</dbReference>
<dbReference type="InterPro" id="IPR001509">
    <property type="entry name" value="Epimerase_deHydtase"/>
</dbReference>
<dbReference type="InterPro" id="IPR011912">
    <property type="entry name" value="Heptose_epim"/>
</dbReference>
<dbReference type="InterPro" id="IPR036291">
    <property type="entry name" value="NAD(P)-bd_dom_sf"/>
</dbReference>
<dbReference type="NCBIfam" id="TIGR02197">
    <property type="entry name" value="heptose_epim"/>
    <property type="match status" value="1"/>
</dbReference>
<dbReference type="NCBIfam" id="NF008360">
    <property type="entry name" value="PRK11150.1"/>
    <property type="match status" value="1"/>
</dbReference>
<dbReference type="PANTHER" id="PTHR43103:SF3">
    <property type="entry name" value="ADP-L-GLYCERO-D-MANNO-HEPTOSE-6-EPIMERASE"/>
    <property type="match status" value="1"/>
</dbReference>
<dbReference type="PANTHER" id="PTHR43103">
    <property type="entry name" value="NUCLEOSIDE-DIPHOSPHATE-SUGAR EPIMERASE"/>
    <property type="match status" value="1"/>
</dbReference>
<dbReference type="Pfam" id="PF01370">
    <property type="entry name" value="Epimerase"/>
    <property type="match status" value="1"/>
</dbReference>
<dbReference type="SUPFAM" id="SSF51735">
    <property type="entry name" value="NAD(P)-binding Rossmann-fold domains"/>
    <property type="match status" value="1"/>
</dbReference>
<evidence type="ECO:0000255" key="1">
    <source>
        <dbReference type="HAMAP-Rule" id="MF_01601"/>
    </source>
</evidence>
<protein>
    <recommendedName>
        <fullName evidence="1">ADP-L-glycero-D-manno-heptose-6-epimerase</fullName>
        <ecNumber evidence="1">5.1.3.20</ecNumber>
    </recommendedName>
    <alternativeName>
        <fullName evidence="1">ADP-L-glycero-beta-D-manno-heptose-6-epimerase</fullName>
        <shortName evidence="1">ADP-glyceromanno-heptose 6-epimerase</shortName>
        <shortName evidence="1">ADP-hep 6-epimerase</shortName>
        <shortName evidence="1">AGME</shortName>
    </alternativeName>
</protein>
<comment type="function">
    <text evidence="1">Catalyzes the interconversion between ADP-D-glycero-beta-D-manno-heptose and ADP-L-glycero-beta-D-manno-heptose via an epimerization at carbon 6 of the heptose.</text>
</comment>
<comment type="catalytic activity">
    <reaction evidence="1">
        <text>ADP-D-glycero-beta-D-manno-heptose = ADP-L-glycero-beta-D-manno-heptose</text>
        <dbReference type="Rhea" id="RHEA:17577"/>
        <dbReference type="ChEBI" id="CHEBI:59967"/>
        <dbReference type="ChEBI" id="CHEBI:61506"/>
        <dbReference type="EC" id="5.1.3.20"/>
    </reaction>
</comment>
<comment type="cofactor">
    <cofactor evidence="1">
        <name>NADP(+)</name>
        <dbReference type="ChEBI" id="CHEBI:58349"/>
    </cofactor>
    <text evidence="1">Binds 1 NADP(+) per subunit.</text>
</comment>
<comment type="pathway">
    <text evidence="1">Nucleotide-sugar biosynthesis; ADP-L-glycero-beta-D-manno-heptose biosynthesis; ADP-L-glycero-beta-D-manno-heptose from D-glycero-beta-D-manno-heptose 7-phosphate: step 4/4.</text>
</comment>
<comment type="subunit">
    <text evidence="1">Homopentamer.</text>
</comment>
<comment type="domain">
    <text evidence="1">Contains a large N-terminal NADP-binding domain, and a smaller C-terminal substrate-binding domain.</text>
</comment>
<comment type="similarity">
    <text evidence="1">Belongs to the NAD(P)-dependent epimerase/dehydratase family. HldD subfamily.</text>
</comment>
<proteinExistence type="inferred from homology"/>
<organism>
    <name type="scientific">Haemophilus influenzae (strain PittGG)</name>
    <dbReference type="NCBI Taxonomy" id="374931"/>
    <lineage>
        <taxon>Bacteria</taxon>
        <taxon>Pseudomonadati</taxon>
        <taxon>Pseudomonadota</taxon>
        <taxon>Gammaproteobacteria</taxon>
        <taxon>Pasteurellales</taxon>
        <taxon>Pasteurellaceae</taxon>
        <taxon>Haemophilus</taxon>
    </lineage>
</organism>
<name>HLDD_HAEIG</name>